<keyword id="KW-0687">Ribonucleoprotein</keyword>
<keyword id="KW-0689">Ribosomal protein</keyword>
<keyword id="KW-0694">RNA-binding</keyword>
<keyword id="KW-0699">rRNA-binding</keyword>
<keyword id="KW-0820">tRNA-binding</keyword>
<sequence>MARLQQFYKETIVSDLVKQFGYKSVMEVPRITKITLNMGVGEAVADKKVLENAVGDMQKIAGQKPVTTKARKSIAGFKIRDGYPIGCMVTLRGPRMFEFLDRLVTIALPRVRDFRGISGKGFDGQGNYNMGVKEQIIFPEIEYDKIDALRGMNISITTTAKTDAEAKALLVAFKFPFKN</sequence>
<proteinExistence type="inferred from homology"/>
<accession>Q47J91</accession>
<dbReference type="EMBL" id="CP000089">
    <property type="protein sequence ID" value="AAZ45090.1"/>
    <property type="molecule type" value="Genomic_DNA"/>
</dbReference>
<dbReference type="SMR" id="Q47J91"/>
<dbReference type="STRING" id="159087.Daro_0331"/>
<dbReference type="KEGG" id="dar:Daro_0331"/>
<dbReference type="eggNOG" id="COG0094">
    <property type="taxonomic scope" value="Bacteria"/>
</dbReference>
<dbReference type="HOGENOM" id="CLU_061015_2_1_4"/>
<dbReference type="OrthoDB" id="9806626at2"/>
<dbReference type="GO" id="GO:1990904">
    <property type="term" value="C:ribonucleoprotein complex"/>
    <property type="evidence" value="ECO:0007669"/>
    <property type="project" value="UniProtKB-KW"/>
</dbReference>
<dbReference type="GO" id="GO:0005840">
    <property type="term" value="C:ribosome"/>
    <property type="evidence" value="ECO:0007669"/>
    <property type="project" value="UniProtKB-KW"/>
</dbReference>
<dbReference type="GO" id="GO:0019843">
    <property type="term" value="F:rRNA binding"/>
    <property type="evidence" value="ECO:0007669"/>
    <property type="project" value="UniProtKB-UniRule"/>
</dbReference>
<dbReference type="GO" id="GO:0003735">
    <property type="term" value="F:structural constituent of ribosome"/>
    <property type="evidence" value="ECO:0007669"/>
    <property type="project" value="InterPro"/>
</dbReference>
<dbReference type="GO" id="GO:0000049">
    <property type="term" value="F:tRNA binding"/>
    <property type="evidence" value="ECO:0007669"/>
    <property type="project" value="UniProtKB-UniRule"/>
</dbReference>
<dbReference type="GO" id="GO:0006412">
    <property type="term" value="P:translation"/>
    <property type="evidence" value="ECO:0007669"/>
    <property type="project" value="UniProtKB-UniRule"/>
</dbReference>
<dbReference type="FunFam" id="3.30.1440.10:FF:000001">
    <property type="entry name" value="50S ribosomal protein L5"/>
    <property type="match status" value="1"/>
</dbReference>
<dbReference type="Gene3D" id="3.30.1440.10">
    <property type="match status" value="1"/>
</dbReference>
<dbReference type="HAMAP" id="MF_01333_B">
    <property type="entry name" value="Ribosomal_uL5_B"/>
    <property type="match status" value="1"/>
</dbReference>
<dbReference type="InterPro" id="IPR002132">
    <property type="entry name" value="Ribosomal_uL5"/>
</dbReference>
<dbReference type="InterPro" id="IPR020930">
    <property type="entry name" value="Ribosomal_uL5_bac-type"/>
</dbReference>
<dbReference type="InterPro" id="IPR031309">
    <property type="entry name" value="Ribosomal_uL5_C"/>
</dbReference>
<dbReference type="InterPro" id="IPR020929">
    <property type="entry name" value="Ribosomal_uL5_CS"/>
</dbReference>
<dbReference type="InterPro" id="IPR022803">
    <property type="entry name" value="Ribosomal_uL5_dom_sf"/>
</dbReference>
<dbReference type="InterPro" id="IPR031310">
    <property type="entry name" value="Ribosomal_uL5_N"/>
</dbReference>
<dbReference type="NCBIfam" id="NF000585">
    <property type="entry name" value="PRK00010.1"/>
    <property type="match status" value="1"/>
</dbReference>
<dbReference type="PANTHER" id="PTHR11994">
    <property type="entry name" value="60S RIBOSOMAL PROTEIN L11-RELATED"/>
    <property type="match status" value="1"/>
</dbReference>
<dbReference type="Pfam" id="PF00281">
    <property type="entry name" value="Ribosomal_L5"/>
    <property type="match status" value="1"/>
</dbReference>
<dbReference type="Pfam" id="PF00673">
    <property type="entry name" value="Ribosomal_L5_C"/>
    <property type="match status" value="1"/>
</dbReference>
<dbReference type="PIRSF" id="PIRSF002161">
    <property type="entry name" value="Ribosomal_L5"/>
    <property type="match status" value="1"/>
</dbReference>
<dbReference type="SUPFAM" id="SSF55282">
    <property type="entry name" value="RL5-like"/>
    <property type="match status" value="1"/>
</dbReference>
<dbReference type="PROSITE" id="PS00358">
    <property type="entry name" value="RIBOSOMAL_L5"/>
    <property type="match status" value="1"/>
</dbReference>
<feature type="chain" id="PRO_0000242991" description="Large ribosomal subunit protein uL5">
    <location>
        <begin position="1"/>
        <end position="179"/>
    </location>
</feature>
<evidence type="ECO:0000255" key="1">
    <source>
        <dbReference type="HAMAP-Rule" id="MF_01333"/>
    </source>
</evidence>
<evidence type="ECO:0000305" key="2"/>
<gene>
    <name evidence="1" type="primary">rplE</name>
    <name type="ordered locus">Daro_0331</name>
</gene>
<name>RL5_DECAR</name>
<comment type="function">
    <text evidence="1">This is one of the proteins that bind and probably mediate the attachment of the 5S RNA into the large ribosomal subunit, where it forms part of the central protuberance. In the 70S ribosome it contacts protein S13 of the 30S subunit (bridge B1b), connecting the 2 subunits; this bridge is implicated in subunit movement. Contacts the P site tRNA; the 5S rRNA and some of its associated proteins might help stabilize positioning of ribosome-bound tRNAs.</text>
</comment>
<comment type="subunit">
    <text evidence="1">Part of the 50S ribosomal subunit; part of the 5S rRNA/L5/L18/L25 subcomplex. Contacts the 5S rRNA and the P site tRNA. Forms a bridge to the 30S subunit in the 70S ribosome.</text>
</comment>
<comment type="similarity">
    <text evidence="1">Belongs to the universal ribosomal protein uL5 family.</text>
</comment>
<reference key="1">
    <citation type="journal article" date="2009" name="BMC Genomics">
        <title>Metabolic analysis of the soil microbe Dechloromonas aromatica str. RCB: indications of a surprisingly complex life-style and cryptic anaerobic pathways for aromatic degradation.</title>
        <authorList>
            <person name="Salinero K.K."/>
            <person name="Keller K."/>
            <person name="Feil W.S."/>
            <person name="Feil H."/>
            <person name="Trong S."/>
            <person name="Di Bartolo G."/>
            <person name="Lapidus A."/>
        </authorList>
    </citation>
    <scope>NUCLEOTIDE SEQUENCE [LARGE SCALE GENOMIC DNA]</scope>
    <source>
        <strain>RCB</strain>
    </source>
</reference>
<protein>
    <recommendedName>
        <fullName evidence="1">Large ribosomal subunit protein uL5</fullName>
    </recommendedName>
    <alternativeName>
        <fullName evidence="2">50S ribosomal protein L5</fullName>
    </alternativeName>
</protein>
<organism>
    <name type="scientific">Dechloromonas aromatica (strain RCB)</name>
    <dbReference type="NCBI Taxonomy" id="159087"/>
    <lineage>
        <taxon>Bacteria</taxon>
        <taxon>Pseudomonadati</taxon>
        <taxon>Pseudomonadota</taxon>
        <taxon>Betaproteobacteria</taxon>
        <taxon>Rhodocyclales</taxon>
        <taxon>Azonexaceae</taxon>
        <taxon>Dechloromonas</taxon>
    </lineage>
</organism>